<name>SOTB_PSEA8</name>
<keyword id="KW-0997">Cell inner membrane</keyword>
<keyword id="KW-1003">Cell membrane</keyword>
<keyword id="KW-0472">Membrane</keyword>
<keyword id="KW-0762">Sugar transport</keyword>
<keyword id="KW-0812">Transmembrane</keyword>
<keyword id="KW-1133">Transmembrane helix</keyword>
<keyword id="KW-0813">Transport</keyword>
<reference key="1">
    <citation type="journal article" date="2009" name="Genome Res.">
        <title>Newly introduced genomic prophage islands are critical determinants of in vivo competitiveness in the Liverpool epidemic strain of Pseudomonas aeruginosa.</title>
        <authorList>
            <person name="Winstanley C."/>
            <person name="Langille M.G.I."/>
            <person name="Fothergill J.L."/>
            <person name="Kukavica-Ibrulj I."/>
            <person name="Paradis-Bleau C."/>
            <person name="Sanschagrin F."/>
            <person name="Thomson N.R."/>
            <person name="Winsor G.L."/>
            <person name="Quail M.A."/>
            <person name="Lennard N."/>
            <person name="Bignell A."/>
            <person name="Clarke L."/>
            <person name="Seeger K."/>
            <person name="Saunders D."/>
            <person name="Harris D."/>
            <person name="Parkhill J."/>
            <person name="Hancock R.E.W."/>
            <person name="Brinkman F.S.L."/>
            <person name="Levesque R.C."/>
        </authorList>
    </citation>
    <scope>NUCLEOTIDE SEQUENCE [LARGE SCALE GENOMIC DNA]</scope>
    <source>
        <strain>LESB58</strain>
    </source>
</reference>
<organism>
    <name type="scientific">Pseudomonas aeruginosa (strain LESB58)</name>
    <dbReference type="NCBI Taxonomy" id="557722"/>
    <lineage>
        <taxon>Bacteria</taxon>
        <taxon>Pseudomonadati</taxon>
        <taxon>Pseudomonadota</taxon>
        <taxon>Gammaproteobacteria</taxon>
        <taxon>Pseudomonadales</taxon>
        <taxon>Pseudomonadaceae</taxon>
        <taxon>Pseudomonas</taxon>
    </lineage>
</organism>
<dbReference type="EMBL" id="FM209186">
    <property type="protein sequence ID" value="CAW25585.1"/>
    <property type="molecule type" value="Genomic_DNA"/>
</dbReference>
<dbReference type="RefSeq" id="WP_004351704.1">
    <property type="nucleotide sequence ID" value="NC_011770.1"/>
</dbReference>
<dbReference type="SMR" id="B7V6N7"/>
<dbReference type="KEGG" id="pag:PLES_08581"/>
<dbReference type="HOGENOM" id="CLU_001265_61_1_6"/>
<dbReference type="GO" id="GO:0005886">
    <property type="term" value="C:plasma membrane"/>
    <property type="evidence" value="ECO:0007669"/>
    <property type="project" value="UniProtKB-SubCell"/>
</dbReference>
<dbReference type="GO" id="GO:0015144">
    <property type="term" value="F:carbohydrate transmembrane transporter activity"/>
    <property type="evidence" value="ECO:0007669"/>
    <property type="project" value="UniProtKB-UniRule"/>
</dbReference>
<dbReference type="CDD" id="cd17324">
    <property type="entry name" value="MFS_NepI_like"/>
    <property type="match status" value="1"/>
</dbReference>
<dbReference type="Gene3D" id="1.20.1250.20">
    <property type="entry name" value="MFS general substrate transporter like domains"/>
    <property type="match status" value="1"/>
</dbReference>
<dbReference type="HAMAP" id="MF_00517">
    <property type="entry name" value="MFS_SotB"/>
    <property type="match status" value="1"/>
</dbReference>
<dbReference type="InterPro" id="IPR011701">
    <property type="entry name" value="MFS"/>
</dbReference>
<dbReference type="InterPro" id="IPR020846">
    <property type="entry name" value="MFS_dom"/>
</dbReference>
<dbReference type="InterPro" id="IPR050189">
    <property type="entry name" value="MFS_Efflux_Transporters"/>
</dbReference>
<dbReference type="InterPro" id="IPR036259">
    <property type="entry name" value="MFS_trans_sf"/>
</dbReference>
<dbReference type="InterPro" id="IPR023495">
    <property type="entry name" value="Sugar_effux_transptr_put"/>
</dbReference>
<dbReference type="NCBIfam" id="NF002921">
    <property type="entry name" value="PRK03545.1"/>
    <property type="match status" value="1"/>
</dbReference>
<dbReference type="PANTHER" id="PTHR43124">
    <property type="entry name" value="PURINE EFFLUX PUMP PBUE"/>
    <property type="match status" value="1"/>
</dbReference>
<dbReference type="PANTHER" id="PTHR43124:SF4">
    <property type="entry name" value="SUGAR EFFLUX TRANSPORTER"/>
    <property type="match status" value="1"/>
</dbReference>
<dbReference type="Pfam" id="PF07690">
    <property type="entry name" value="MFS_1"/>
    <property type="match status" value="1"/>
</dbReference>
<dbReference type="SUPFAM" id="SSF103473">
    <property type="entry name" value="MFS general substrate transporter"/>
    <property type="match status" value="1"/>
</dbReference>
<dbReference type="PROSITE" id="PS50850">
    <property type="entry name" value="MFS"/>
    <property type="match status" value="1"/>
</dbReference>
<accession>B7V6N7</accession>
<sequence length="396" mass="41869">MDSTSETRSGSWLSVIALALAAFIFNTTEFVPVGLLSDIGHSFEMPTSQVGLMLTIYAWVVSLASLPMMLLTRNIERRKLLVGVFLLFIASHVLSGLAWSFQVLMLSRIGIAFAHAVFWAITASLAVRVAPPGQQAKALGLLATGTTLAMVLGIPLGRVVGEALGWRTTFMAIAGLSVLTLLYLARSLPLLPSQNSGSLRSLPMLFRRPALVCLYVLTVVVISAQFTAYSYIEPFAKQVARMSGEATTLLLLLFGGAGIFGSILFSRYSEAFPRGFLLAAILALGSSLALLLPLSAQPTWLMALSLLWGMSIMCFGLAQQSRVLRLASDATDVAMALFSGLYNVGIGAGALLGSVVSERMGLASIGNVGAALALAGLLLALFAALRYAEALKSTSL</sequence>
<protein>
    <recommendedName>
        <fullName evidence="1">Probable sugar efflux transporter</fullName>
    </recommendedName>
</protein>
<comment type="function">
    <text evidence="1">Involved in the efflux of sugars. The physiological role may be the reduction of the intracellular concentration of toxic sugars or sugar metabolites.</text>
</comment>
<comment type="subcellular location">
    <subcellularLocation>
        <location evidence="1">Cell inner membrane</location>
        <topology evidence="1">Multi-pass membrane protein</topology>
    </subcellularLocation>
</comment>
<comment type="similarity">
    <text evidence="1">Belongs to the major facilitator superfamily. SotB (TC 2.A.1.2) family.</text>
</comment>
<feature type="chain" id="PRO_1000127467" description="Probable sugar efflux transporter">
    <location>
        <begin position="1"/>
        <end position="396"/>
    </location>
</feature>
<feature type="transmembrane region" description="Helical" evidence="1">
    <location>
        <begin position="15"/>
        <end position="35"/>
    </location>
</feature>
<feature type="transmembrane region" description="Helical" evidence="1">
    <location>
        <begin position="50"/>
        <end position="70"/>
    </location>
</feature>
<feature type="transmembrane region" description="Helical" evidence="1">
    <location>
        <begin position="81"/>
        <end position="101"/>
    </location>
</feature>
<feature type="transmembrane region" description="Helical" evidence="1">
    <location>
        <begin position="103"/>
        <end position="123"/>
    </location>
</feature>
<feature type="transmembrane region" description="Helical" evidence="1">
    <location>
        <begin position="136"/>
        <end position="156"/>
    </location>
</feature>
<feature type="transmembrane region" description="Helical" evidence="1">
    <location>
        <begin position="170"/>
        <end position="190"/>
    </location>
</feature>
<feature type="transmembrane region" description="Helical" evidence="1">
    <location>
        <begin position="209"/>
        <end position="229"/>
    </location>
</feature>
<feature type="transmembrane region" description="Helical" evidence="1">
    <location>
        <begin position="246"/>
        <end position="266"/>
    </location>
</feature>
<feature type="transmembrane region" description="Helical" evidence="1">
    <location>
        <begin position="276"/>
        <end position="296"/>
    </location>
</feature>
<feature type="transmembrane region" description="Helical" evidence="1">
    <location>
        <begin position="298"/>
        <end position="318"/>
    </location>
</feature>
<feature type="transmembrane region" description="Helical" evidence="1">
    <location>
        <begin position="333"/>
        <end position="353"/>
    </location>
</feature>
<feature type="transmembrane region" description="Helical" evidence="1">
    <location>
        <begin position="365"/>
        <end position="385"/>
    </location>
</feature>
<evidence type="ECO:0000255" key="1">
    <source>
        <dbReference type="HAMAP-Rule" id="MF_00517"/>
    </source>
</evidence>
<proteinExistence type="inferred from homology"/>
<gene>
    <name evidence="1" type="primary">sotB</name>
    <name type="ordered locus">PLES_08581</name>
</gene>